<keyword id="KW-0028">Amino-acid biosynthesis</keyword>
<keyword id="KW-0067">ATP-binding</keyword>
<keyword id="KW-0418">Kinase</keyword>
<keyword id="KW-0547">Nucleotide-binding</keyword>
<keyword id="KW-1185">Reference proteome</keyword>
<keyword id="KW-0791">Threonine biosynthesis</keyword>
<keyword id="KW-0808">Transferase</keyword>
<proteinExistence type="inferred from homology"/>
<feature type="chain" id="PRO_0000172188" description="Homoserine kinase">
    <location>
        <begin position="1"/>
        <end position="331"/>
    </location>
</feature>
<protein>
    <recommendedName>
        <fullName evidence="1">Homoserine kinase</fullName>
        <shortName evidence="1">HK</shortName>
        <shortName evidence="1">HSK</shortName>
        <ecNumber evidence="1">2.7.1.39</ecNumber>
    </recommendedName>
</protein>
<sequence>MAVFTAVSDADLALWMRHYDLGDVVAFRGIPSGIENSNFFLTTTRGEYVLTIFENLTAGQLPFYVDLMSHLAKHGVPVPAPVARDDGTLFGELHGKPAAIVTKLEGAAQLAPGVEHCVEVGQMLARMHLAGRDYPRHQPNLRSLPWWRDTVPAIAPFVTGEQRALLEGELAHQAAFFASDDYAALPEGPCHCDLFRDNALFAHAEPDTGHSVRLGGFFDFYFAGCDKWLFDVAVTVNDWCVDLPTGALDAARADALLRAYQTVRPFTAGERRHWGDMLRAGAYRFWVSRLYDFHLPRAAQMLKPHDPGHFERILRERIAHAGALPETHACN</sequence>
<organism>
    <name type="scientific">Burkholderia pseudomallei (strain K96243)</name>
    <dbReference type="NCBI Taxonomy" id="272560"/>
    <lineage>
        <taxon>Bacteria</taxon>
        <taxon>Pseudomonadati</taxon>
        <taxon>Pseudomonadota</taxon>
        <taxon>Betaproteobacteria</taxon>
        <taxon>Burkholderiales</taxon>
        <taxon>Burkholderiaceae</taxon>
        <taxon>Burkholderia</taxon>
        <taxon>pseudomallei group</taxon>
    </lineage>
</organism>
<gene>
    <name evidence="1" type="primary">thrB</name>
    <name type="ordered locus">BPSS1779</name>
</gene>
<dbReference type="EC" id="2.7.1.39" evidence="1"/>
<dbReference type="EMBL" id="BX571966">
    <property type="protein sequence ID" value="CAH39255.1"/>
    <property type="molecule type" value="Genomic_DNA"/>
</dbReference>
<dbReference type="RefSeq" id="WP_004530313.1">
    <property type="nucleotide sequence ID" value="NZ_CP009537.1"/>
</dbReference>
<dbReference type="RefSeq" id="YP_111783.1">
    <property type="nucleotide sequence ID" value="NC_006351.1"/>
</dbReference>
<dbReference type="SMR" id="Q63JD9"/>
<dbReference type="STRING" id="272560.BPSS1779"/>
<dbReference type="KEGG" id="bps:BPSS1779"/>
<dbReference type="PATRIC" id="fig|272560.51.peg.5218"/>
<dbReference type="eggNOG" id="COG2334">
    <property type="taxonomic scope" value="Bacteria"/>
</dbReference>
<dbReference type="UniPathway" id="UPA00050">
    <property type="reaction ID" value="UER00064"/>
</dbReference>
<dbReference type="Proteomes" id="UP000000605">
    <property type="component" value="Chromosome 2"/>
</dbReference>
<dbReference type="GO" id="GO:0005524">
    <property type="term" value="F:ATP binding"/>
    <property type="evidence" value="ECO:0007669"/>
    <property type="project" value="UniProtKB-KW"/>
</dbReference>
<dbReference type="GO" id="GO:0004413">
    <property type="term" value="F:homoserine kinase activity"/>
    <property type="evidence" value="ECO:0007669"/>
    <property type="project" value="UniProtKB-UniRule"/>
</dbReference>
<dbReference type="GO" id="GO:0009088">
    <property type="term" value="P:threonine biosynthetic process"/>
    <property type="evidence" value="ECO:0007669"/>
    <property type="project" value="UniProtKB-UniRule"/>
</dbReference>
<dbReference type="CDD" id="cd05153">
    <property type="entry name" value="HomoserineK_II"/>
    <property type="match status" value="1"/>
</dbReference>
<dbReference type="Gene3D" id="3.90.1200.10">
    <property type="match status" value="1"/>
</dbReference>
<dbReference type="Gene3D" id="3.30.200.20">
    <property type="entry name" value="Phosphorylase Kinase, domain 1"/>
    <property type="match status" value="1"/>
</dbReference>
<dbReference type="HAMAP" id="MF_00301">
    <property type="entry name" value="Homoser_kinase_2"/>
    <property type="match status" value="1"/>
</dbReference>
<dbReference type="InterPro" id="IPR002575">
    <property type="entry name" value="Aminoglycoside_PTrfase"/>
</dbReference>
<dbReference type="InterPro" id="IPR005280">
    <property type="entry name" value="Homoserine_kinase_II"/>
</dbReference>
<dbReference type="InterPro" id="IPR011009">
    <property type="entry name" value="Kinase-like_dom_sf"/>
</dbReference>
<dbReference type="InterPro" id="IPR050249">
    <property type="entry name" value="Pseudomonas-type_ThrB"/>
</dbReference>
<dbReference type="NCBIfam" id="NF003558">
    <property type="entry name" value="PRK05231.1"/>
    <property type="match status" value="1"/>
</dbReference>
<dbReference type="NCBIfam" id="TIGR00938">
    <property type="entry name" value="thrB_alt"/>
    <property type="match status" value="1"/>
</dbReference>
<dbReference type="PANTHER" id="PTHR21064:SF6">
    <property type="entry name" value="AMINOGLYCOSIDE PHOSPHOTRANSFERASE DOMAIN-CONTAINING PROTEIN"/>
    <property type="match status" value="1"/>
</dbReference>
<dbReference type="PANTHER" id="PTHR21064">
    <property type="entry name" value="AMINOGLYCOSIDE PHOSPHOTRANSFERASE DOMAIN-CONTAINING PROTEIN-RELATED"/>
    <property type="match status" value="1"/>
</dbReference>
<dbReference type="Pfam" id="PF01636">
    <property type="entry name" value="APH"/>
    <property type="match status" value="1"/>
</dbReference>
<dbReference type="SUPFAM" id="SSF56112">
    <property type="entry name" value="Protein kinase-like (PK-like)"/>
    <property type="match status" value="1"/>
</dbReference>
<name>KHSE_BURPS</name>
<reference key="1">
    <citation type="journal article" date="2004" name="Proc. Natl. Acad. Sci. U.S.A.">
        <title>Genomic plasticity of the causative agent of melioidosis, Burkholderia pseudomallei.</title>
        <authorList>
            <person name="Holden M.T.G."/>
            <person name="Titball R.W."/>
            <person name="Peacock S.J."/>
            <person name="Cerdeno-Tarraga A.-M."/>
            <person name="Atkins T."/>
            <person name="Crossman L.C."/>
            <person name="Pitt T."/>
            <person name="Churcher C."/>
            <person name="Mungall K.L."/>
            <person name="Bentley S.D."/>
            <person name="Sebaihia M."/>
            <person name="Thomson N.R."/>
            <person name="Bason N."/>
            <person name="Beacham I.R."/>
            <person name="Brooks K."/>
            <person name="Brown K.A."/>
            <person name="Brown N.F."/>
            <person name="Challis G.L."/>
            <person name="Cherevach I."/>
            <person name="Chillingworth T."/>
            <person name="Cronin A."/>
            <person name="Crossett B."/>
            <person name="Davis P."/>
            <person name="DeShazer D."/>
            <person name="Feltwell T."/>
            <person name="Fraser A."/>
            <person name="Hance Z."/>
            <person name="Hauser H."/>
            <person name="Holroyd S."/>
            <person name="Jagels K."/>
            <person name="Keith K.E."/>
            <person name="Maddison M."/>
            <person name="Moule S."/>
            <person name="Price C."/>
            <person name="Quail M.A."/>
            <person name="Rabbinowitsch E."/>
            <person name="Rutherford K."/>
            <person name="Sanders M."/>
            <person name="Simmonds M."/>
            <person name="Songsivilai S."/>
            <person name="Stevens K."/>
            <person name="Tumapa S."/>
            <person name="Vesaratchavest M."/>
            <person name="Whitehead S."/>
            <person name="Yeats C."/>
            <person name="Barrell B.G."/>
            <person name="Oyston P.C.F."/>
            <person name="Parkhill J."/>
        </authorList>
    </citation>
    <scope>NUCLEOTIDE SEQUENCE [LARGE SCALE GENOMIC DNA]</scope>
    <source>
        <strain>K96243</strain>
    </source>
</reference>
<accession>Q63JD9</accession>
<comment type="catalytic activity">
    <reaction evidence="1">
        <text>L-homoserine + ATP = O-phospho-L-homoserine + ADP + H(+)</text>
        <dbReference type="Rhea" id="RHEA:13985"/>
        <dbReference type="ChEBI" id="CHEBI:15378"/>
        <dbReference type="ChEBI" id="CHEBI:30616"/>
        <dbReference type="ChEBI" id="CHEBI:57476"/>
        <dbReference type="ChEBI" id="CHEBI:57590"/>
        <dbReference type="ChEBI" id="CHEBI:456216"/>
        <dbReference type="EC" id="2.7.1.39"/>
    </reaction>
</comment>
<comment type="pathway">
    <text evidence="1">Amino-acid biosynthesis; L-threonine biosynthesis; L-threonine from L-aspartate: step 4/5.</text>
</comment>
<comment type="similarity">
    <text evidence="1">Belongs to the pseudomonas-type ThrB family.</text>
</comment>
<evidence type="ECO:0000255" key="1">
    <source>
        <dbReference type="HAMAP-Rule" id="MF_00301"/>
    </source>
</evidence>